<comment type="function">
    <text evidence="5 6 12">Component of the 19S cap proteasome complex which acts as a regulatory subunit of the 26S proteasome, involved in the ATP-dependent degradation of ubiquitinated proteins.</text>
</comment>
<comment type="subunit">
    <text evidence="8 9 10 11 12">The 26S proteasome is composed of a core protease, known as the 20S proteasome, capped at one or both ends by the 19S regulatory complex (RC). The RC is composed of at least 18 different subunits in two subcomplexes, the base and the lid, which form the portions proximal and distal to the 20S proteolytic core, respectively. Component of the lid subcomplex of the 19S RC.</text>
</comment>
<comment type="interaction">
    <interactant intactId="EBI-15940">
        <id>Q06103</id>
    </interactant>
    <interactant intactId="EBI-15927">
        <id>P40016</id>
        <label>RPN3</label>
    </interactant>
    <organismsDiffer>false</organismsDiffer>
    <experiments>8</experiments>
</comment>
<comment type="interaction">
    <interactant intactId="EBI-15940">
        <id>Q06103</id>
    </interactant>
    <interactant intactId="EBI-31337">
        <id>O94742</id>
        <label>SEM1</label>
    </interactant>
    <organismsDiffer>false</organismsDiffer>
    <experiments>4</experiments>
</comment>
<comment type="subcellular location">
    <subcellularLocation>
        <location evidence="3 7">Nucleus</location>
    </subcellularLocation>
</comment>
<comment type="miscellaneous">
    <text evidence="4">Present with 51900 molecules/cell in log phase SD medium.</text>
</comment>
<evidence type="ECO:0000255" key="1">
    <source>
        <dbReference type="PROSITE-ProRule" id="PRU01185"/>
    </source>
</evidence>
<evidence type="ECO:0000269" key="2">
    <source>
    </source>
</evidence>
<evidence type="ECO:0000269" key="3">
    <source>
    </source>
</evidence>
<evidence type="ECO:0000269" key="4">
    <source>
    </source>
</evidence>
<evidence type="ECO:0000269" key="5">
    <source>
    </source>
</evidence>
<evidence type="ECO:0000269" key="6">
    <source>
    </source>
</evidence>
<evidence type="ECO:0000269" key="7">
    <source>
    </source>
</evidence>
<evidence type="ECO:0000269" key="8">
    <source>
    </source>
</evidence>
<evidence type="ECO:0000269" key="9">
    <source>
    </source>
</evidence>
<evidence type="ECO:0000269" key="10">
    <source>
    </source>
</evidence>
<evidence type="ECO:0000269" key="11">
    <source>
    </source>
</evidence>
<evidence type="ECO:0000269" key="12">
    <source>
    </source>
</evidence>
<evidence type="ECO:0000303" key="13">
    <source>
    </source>
</evidence>
<evidence type="ECO:0000305" key="14"/>
<evidence type="ECO:0000312" key="15">
    <source>
        <dbReference type="SGD" id="S000006312"/>
    </source>
</evidence>
<evidence type="ECO:0007744" key="16">
    <source>
        <dbReference type="PDB" id="3JCK"/>
    </source>
</evidence>
<evidence type="ECO:0007744" key="17">
    <source>
        <dbReference type="PDB" id="3JCO"/>
    </source>
</evidence>
<evidence type="ECO:0007744" key="18">
    <source>
        <dbReference type="PDB" id="3JCP"/>
    </source>
</evidence>
<evidence type="ECO:0007744" key="19">
    <source>
        <dbReference type="PDB" id="4CR2"/>
    </source>
</evidence>
<evidence type="ECO:0007744" key="20">
    <source>
        <dbReference type="PDB" id="4CR3"/>
    </source>
</evidence>
<evidence type="ECO:0007744" key="21">
    <source>
        <dbReference type="PDB" id="4CR4"/>
    </source>
</evidence>
<evidence type="ECO:0007744" key="22">
    <source>
    </source>
</evidence>
<evidence type="ECO:0007744" key="23">
    <source>
    </source>
</evidence>
<evidence type="ECO:0007829" key="24">
    <source>
        <dbReference type="PDB" id="3JCK"/>
    </source>
</evidence>
<accession>Q06103</accession>
<accession>D6W4A6</accession>
<accession>E9P8W9</accession>
<keyword id="KW-0002">3D-structure</keyword>
<keyword id="KW-0903">Direct protein sequencing</keyword>
<keyword id="KW-0539">Nucleus</keyword>
<keyword id="KW-0597">Phosphoprotein</keyword>
<keyword id="KW-0647">Proteasome</keyword>
<keyword id="KW-1185">Reference proteome</keyword>
<keyword id="KW-0802">TPR repeat</keyword>
<organism>
    <name type="scientific">Saccharomyces cerevisiae (strain ATCC 204508 / S288c)</name>
    <name type="common">Baker's yeast</name>
    <dbReference type="NCBI Taxonomy" id="559292"/>
    <lineage>
        <taxon>Eukaryota</taxon>
        <taxon>Fungi</taxon>
        <taxon>Dikarya</taxon>
        <taxon>Ascomycota</taxon>
        <taxon>Saccharomycotina</taxon>
        <taxon>Saccharomycetes</taxon>
        <taxon>Saccharomycetales</taxon>
        <taxon>Saccharomycetaceae</taxon>
        <taxon>Saccharomyces</taxon>
    </lineage>
</organism>
<dbReference type="EMBL" id="U32445">
    <property type="protein sequence ID" value="AAB68078.1"/>
    <property type="molecule type" value="Genomic_DNA"/>
</dbReference>
<dbReference type="EMBL" id="AY692769">
    <property type="protein sequence ID" value="AAT92788.1"/>
    <property type="molecule type" value="Genomic_DNA"/>
</dbReference>
<dbReference type="EMBL" id="BK006949">
    <property type="protein sequence ID" value="DAA11522.1"/>
    <property type="molecule type" value="Genomic_DNA"/>
</dbReference>
<dbReference type="PIR" id="S59773">
    <property type="entry name" value="S59773"/>
</dbReference>
<dbReference type="RefSeq" id="NP_015433.1">
    <property type="nucleotide sequence ID" value="NM_001184205.1"/>
</dbReference>
<dbReference type="PDB" id="3J47">
    <property type="method" value="EM"/>
    <property type="chains" value="R=397-422"/>
</dbReference>
<dbReference type="PDB" id="3JCK">
    <property type="method" value="EM"/>
    <property type="resolution" value="3.50 A"/>
    <property type="chains" value="D=1-429"/>
</dbReference>
<dbReference type="PDB" id="3JCO">
    <property type="method" value="EM"/>
    <property type="resolution" value="4.80 A"/>
    <property type="chains" value="R=1-429"/>
</dbReference>
<dbReference type="PDB" id="3JCP">
    <property type="method" value="EM"/>
    <property type="resolution" value="4.60 A"/>
    <property type="chains" value="R=1-429"/>
</dbReference>
<dbReference type="PDB" id="4CR2">
    <property type="method" value="EM"/>
    <property type="resolution" value="7.70 A"/>
    <property type="chains" value="R=1-429"/>
</dbReference>
<dbReference type="PDB" id="4CR3">
    <property type="method" value="EM"/>
    <property type="resolution" value="9.30 A"/>
    <property type="chains" value="R=1-429"/>
</dbReference>
<dbReference type="PDB" id="4CR4">
    <property type="method" value="EM"/>
    <property type="resolution" value="8.80 A"/>
    <property type="chains" value="R=1-429"/>
</dbReference>
<dbReference type="PDB" id="5A5B">
    <property type="method" value="EM"/>
    <property type="resolution" value="9.50 A"/>
    <property type="chains" value="R=1-429"/>
</dbReference>
<dbReference type="PDB" id="5MPB">
    <property type="method" value="EM"/>
    <property type="resolution" value="7.80 A"/>
    <property type="chains" value="R=1-429"/>
</dbReference>
<dbReference type="PDB" id="5MPC">
    <property type="method" value="EM"/>
    <property type="resolution" value="7.70 A"/>
    <property type="chains" value="R=1-429"/>
</dbReference>
<dbReference type="PDB" id="5MPD">
    <property type="method" value="EM"/>
    <property type="resolution" value="4.10 A"/>
    <property type="chains" value="R=1-429"/>
</dbReference>
<dbReference type="PDB" id="5MPE">
    <property type="method" value="EM"/>
    <property type="resolution" value="4.50 A"/>
    <property type="chains" value="R=1-429"/>
</dbReference>
<dbReference type="PDB" id="5WVI">
    <property type="method" value="EM"/>
    <property type="resolution" value="6.30 A"/>
    <property type="chains" value="R=1-429"/>
</dbReference>
<dbReference type="PDB" id="5WVK">
    <property type="method" value="EM"/>
    <property type="resolution" value="4.20 A"/>
    <property type="chains" value="R=1-429"/>
</dbReference>
<dbReference type="PDB" id="6FVT">
    <property type="method" value="EM"/>
    <property type="resolution" value="4.10 A"/>
    <property type="chains" value="R=20-424"/>
</dbReference>
<dbReference type="PDB" id="6FVU">
    <property type="method" value="EM"/>
    <property type="resolution" value="4.50 A"/>
    <property type="chains" value="R=20-424"/>
</dbReference>
<dbReference type="PDB" id="6FVV">
    <property type="method" value="EM"/>
    <property type="resolution" value="5.40 A"/>
    <property type="chains" value="R=20-424"/>
</dbReference>
<dbReference type="PDB" id="6FVW">
    <property type="method" value="EM"/>
    <property type="resolution" value="4.50 A"/>
    <property type="chains" value="R=20-424"/>
</dbReference>
<dbReference type="PDB" id="6FVX">
    <property type="method" value="EM"/>
    <property type="resolution" value="4.90 A"/>
    <property type="chains" value="R=20-424"/>
</dbReference>
<dbReference type="PDB" id="6FVY">
    <property type="method" value="EM"/>
    <property type="resolution" value="6.10 A"/>
    <property type="chains" value="R=20-424"/>
</dbReference>
<dbReference type="PDB" id="6J2C">
    <property type="method" value="EM"/>
    <property type="resolution" value="7.00 A"/>
    <property type="chains" value="R=1-429"/>
</dbReference>
<dbReference type="PDB" id="6J2N">
    <property type="method" value="EM"/>
    <property type="resolution" value="7.50 A"/>
    <property type="chains" value="R=1-429"/>
</dbReference>
<dbReference type="PDB" id="6J2Q">
    <property type="method" value="EM"/>
    <property type="resolution" value="3.80 A"/>
    <property type="chains" value="R=1-429"/>
</dbReference>
<dbReference type="PDB" id="6J2X">
    <property type="method" value="EM"/>
    <property type="resolution" value="3.80 A"/>
    <property type="chains" value="R=1-429"/>
</dbReference>
<dbReference type="PDB" id="6J30">
    <property type="method" value="EM"/>
    <property type="resolution" value="4.50 A"/>
    <property type="chains" value="R=1-429"/>
</dbReference>
<dbReference type="PDB" id="7QO3">
    <property type="method" value="EM"/>
    <property type="resolution" value="6.10 A"/>
    <property type="chains" value="R=1-429"/>
</dbReference>
<dbReference type="PDB" id="7QO5">
    <property type="method" value="EM"/>
    <property type="resolution" value="6.00 A"/>
    <property type="chains" value="R=1-429"/>
</dbReference>
<dbReference type="PDBsum" id="3J47"/>
<dbReference type="PDBsum" id="3JCK"/>
<dbReference type="PDBsum" id="3JCO"/>
<dbReference type="PDBsum" id="3JCP"/>
<dbReference type="PDBsum" id="4CR2"/>
<dbReference type="PDBsum" id="4CR3"/>
<dbReference type="PDBsum" id="4CR4"/>
<dbReference type="PDBsum" id="5A5B"/>
<dbReference type="PDBsum" id="5MPB"/>
<dbReference type="PDBsum" id="5MPC"/>
<dbReference type="PDBsum" id="5MPD"/>
<dbReference type="PDBsum" id="5MPE"/>
<dbReference type="PDBsum" id="5WVI"/>
<dbReference type="PDBsum" id="5WVK"/>
<dbReference type="PDBsum" id="6FVT"/>
<dbReference type="PDBsum" id="6FVU"/>
<dbReference type="PDBsum" id="6FVV"/>
<dbReference type="PDBsum" id="6FVW"/>
<dbReference type="PDBsum" id="6FVX"/>
<dbReference type="PDBsum" id="6FVY"/>
<dbReference type="PDBsum" id="6J2C"/>
<dbReference type="PDBsum" id="6J2N"/>
<dbReference type="PDBsum" id="6J2Q"/>
<dbReference type="PDBsum" id="6J2X"/>
<dbReference type="PDBsum" id="6J30"/>
<dbReference type="PDBsum" id="7QO3"/>
<dbReference type="PDBsum" id="7QO5"/>
<dbReference type="EMDB" id="EMD-14082"/>
<dbReference type="EMDB" id="EMD-14084"/>
<dbReference type="EMDB" id="EMD-3136"/>
<dbReference type="EMDB" id="EMD-3536"/>
<dbReference type="EMDB" id="EMD-3537"/>
<dbReference type="EMDB" id="EMD-4321"/>
<dbReference type="EMDB" id="EMD-4322"/>
<dbReference type="EMDB" id="EMD-4323"/>
<dbReference type="EMDB" id="EMD-4324"/>
<dbReference type="EMDB" id="EMD-6693"/>
<dbReference type="EMDB" id="EMD-6694"/>
<dbReference type="EMDB" id="EMD-9769"/>
<dbReference type="EMDB" id="EMD-9770"/>
<dbReference type="EMDB" id="EMD-9771"/>
<dbReference type="EMDB" id="EMD-9772"/>
<dbReference type="EMDB" id="EMD-9773"/>
<dbReference type="SMR" id="Q06103"/>
<dbReference type="BioGRID" id="36274">
    <property type="interactions" value="520"/>
</dbReference>
<dbReference type="ComplexPortal" id="CPX-2262">
    <property type="entry name" value="26S proteasome complex"/>
</dbReference>
<dbReference type="DIP" id="DIP-2880N"/>
<dbReference type="FunCoup" id="Q06103">
    <property type="interactions" value="1329"/>
</dbReference>
<dbReference type="IntAct" id="Q06103">
    <property type="interactions" value="48"/>
</dbReference>
<dbReference type="MINT" id="Q06103"/>
<dbReference type="STRING" id="4932.YPR108W"/>
<dbReference type="iPTMnet" id="Q06103"/>
<dbReference type="PaxDb" id="4932-YPR108W"/>
<dbReference type="PeptideAtlas" id="Q06103"/>
<dbReference type="EnsemblFungi" id="YPR108W_mRNA">
    <property type="protein sequence ID" value="YPR108W"/>
    <property type="gene ID" value="YPR108W"/>
</dbReference>
<dbReference type="GeneID" id="856223"/>
<dbReference type="KEGG" id="sce:YPR108W"/>
<dbReference type="AGR" id="SGD:S000006312"/>
<dbReference type="SGD" id="S000006312">
    <property type="gene designation" value="RPN7"/>
</dbReference>
<dbReference type="VEuPathDB" id="FungiDB:YPR108W"/>
<dbReference type="eggNOG" id="KOG0687">
    <property type="taxonomic scope" value="Eukaryota"/>
</dbReference>
<dbReference type="GeneTree" id="ENSGT00510000046608"/>
<dbReference type="HOGENOM" id="CLU_031814_1_1_1"/>
<dbReference type="InParanoid" id="Q06103"/>
<dbReference type="OMA" id="RLHCKVD"/>
<dbReference type="OrthoDB" id="1452at2759"/>
<dbReference type="BioCyc" id="YEAST:G3O-34248-MONOMER"/>
<dbReference type="Reactome" id="R-SCE-1236978">
    <property type="pathway name" value="Cross-presentation of soluble exogenous antigens (endosomes)"/>
</dbReference>
<dbReference type="Reactome" id="R-SCE-5668541">
    <property type="pathway name" value="TNFR2 non-canonical NF-kB pathway"/>
</dbReference>
<dbReference type="Reactome" id="R-SCE-5687128">
    <property type="pathway name" value="MAPK6/MAPK4 signaling"/>
</dbReference>
<dbReference type="Reactome" id="R-SCE-5689880">
    <property type="pathway name" value="Ub-specific processing proteases"/>
</dbReference>
<dbReference type="Reactome" id="R-SCE-6798695">
    <property type="pathway name" value="Neutrophil degranulation"/>
</dbReference>
<dbReference type="Reactome" id="R-SCE-68949">
    <property type="pathway name" value="Orc1 removal from chromatin"/>
</dbReference>
<dbReference type="Reactome" id="R-SCE-69017">
    <property type="pathway name" value="CDK-mediated phosphorylation and removal of Cdc6"/>
</dbReference>
<dbReference type="Reactome" id="R-SCE-69601">
    <property type="pathway name" value="Ubiquitin Mediated Degradation of Phosphorylated Cdc25A"/>
</dbReference>
<dbReference type="Reactome" id="R-SCE-8854050">
    <property type="pathway name" value="FBXL7 down-regulates AURKA during mitotic entry and in early mitosis"/>
</dbReference>
<dbReference type="Reactome" id="R-SCE-8948751">
    <property type="pathway name" value="Regulation of PTEN stability and activity"/>
</dbReference>
<dbReference type="Reactome" id="R-SCE-8951664">
    <property type="pathway name" value="Neddylation"/>
</dbReference>
<dbReference type="Reactome" id="R-SCE-9755511">
    <property type="pathway name" value="KEAP1-NFE2L2 pathway"/>
</dbReference>
<dbReference type="Reactome" id="R-SCE-983168">
    <property type="pathway name" value="Antigen processing: Ubiquitination &amp; Proteasome degradation"/>
</dbReference>
<dbReference type="Reactome" id="R-SCE-9907900">
    <property type="pathway name" value="Proteasome assembly"/>
</dbReference>
<dbReference type="BioGRID-ORCS" id="856223">
    <property type="hits" value="0 hits in 10 CRISPR screens"/>
</dbReference>
<dbReference type="EvolutionaryTrace" id="Q06103"/>
<dbReference type="PRO" id="PR:Q06103"/>
<dbReference type="Proteomes" id="UP000002311">
    <property type="component" value="Chromosome XVI"/>
</dbReference>
<dbReference type="RNAct" id="Q06103">
    <property type="molecule type" value="protein"/>
</dbReference>
<dbReference type="GO" id="GO:0005634">
    <property type="term" value="C:nucleus"/>
    <property type="evidence" value="ECO:0000314"/>
    <property type="project" value="SGD"/>
</dbReference>
<dbReference type="GO" id="GO:0000502">
    <property type="term" value="C:proteasome complex"/>
    <property type="evidence" value="ECO:0000353"/>
    <property type="project" value="ComplexPortal"/>
</dbReference>
<dbReference type="GO" id="GO:0005838">
    <property type="term" value="C:proteasome regulatory particle"/>
    <property type="evidence" value="ECO:0000318"/>
    <property type="project" value="GO_Central"/>
</dbReference>
<dbReference type="GO" id="GO:0008541">
    <property type="term" value="C:proteasome regulatory particle, lid subcomplex"/>
    <property type="evidence" value="ECO:0000314"/>
    <property type="project" value="SGD"/>
</dbReference>
<dbReference type="GO" id="GO:0005198">
    <property type="term" value="F:structural molecule activity"/>
    <property type="evidence" value="ECO:0000315"/>
    <property type="project" value="SGD"/>
</dbReference>
<dbReference type="GO" id="GO:0043161">
    <property type="term" value="P:proteasome-mediated ubiquitin-dependent protein catabolic process"/>
    <property type="evidence" value="ECO:0000314"/>
    <property type="project" value="ComplexPortal"/>
</dbReference>
<dbReference type="GO" id="GO:0006511">
    <property type="term" value="P:ubiquitin-dependent protein catabolic process"/>
    <property type="evidence" value="ECO:0000304"/>
    <property type="project" value="SGD"/>
</dbReference>
<dbReference type="FunFam" id="1.25.40.570:FF:000005">
    <property type="entry name" value="26S proteasome regulatory subunit N7"/>
    <property type="match status" value="1"/>
</dbReference>
<dbReference type="Gene3D" id="1.25.40.570">
    <property type="match status" value="1"/>
</dbReference>
<dbReference type="InterPro" id="IPR000717">
    <property type="entry name" value="PCI_dom"/>
</dbReference>
<dbReference type="InterPro" id="IPR019585">
    <property type="entry name" value="Rpn7/CSN1"/>
</dbReference>
<dbReference type="InterPro" id="IPR045135">
    <property type="entry name" value="Rpn7_N"/>
</dbReference>
<dbReference type="InterPro" id="IPR049549">
    <property type="entry name" value="RPN7_PSMD6_C"/>
</dbReference>
<dbReference type="InterPro" id="IPR011990">
    <property type="entry name" value="TPR-like_helical_dom_sf"/>
</dbReference>
<dbReference type="InterPro" id="IPR019734">
    <property type="entry name" value="TPR_rpt"/>
</dbReference>
<dbReference type="InterPro" id="IPR036390">
    <property type="entry name" value="WH_DNA-bd_sf"/>
</dbReference>
<dbReference type="PANTHER" id="PTHR14145:SF1">
    <property type="entry name" value="26S PROTEASOME NON-ATPASE REGULATORY SUBUNIT 6"/>
    <property type="match status" value="1"/>
</dbReference>
<dbReference type="PANTHER" id="PTHR14145">
    <property type="entry name" value="26S PROTESOME SUBUNIT 6"/>
    <property type="match status" value="1"/>
</dbReference>
<dbReference type="Pfam" id="PF01399">
    <property type="entry name" value="PCI"/>
    <property type="match status" value="1"/>
</dbReference>
<dbReference type="Pfam" id="PF10602">
    <property type="entry name" value="RPN7"/>
    <property type="match status" value="1"/>
</dbReference>
<dbReference type="Pfam" id="PF21154">
    <property type="entry name" value="RPN7_PSMD6_C"/>
    <property type="match status" value="1"/>
</dbReference>
<dbReference type="SMART" id="SM00088">
    <property type="entry name" value="PINT"/>
    <property type="match status" value="1"/>
</dbReference>
<dbReference type="SUPFAM" id="SSF48452">
    <property type="entry name" value="TPR-like"/>
    <property type="match status" value="1"/>
</dbReference>
<dbReference type="SUPFAM" id="SSF46785">
    <property type="entry name" value="Winged helix' DNA-binding domain"/>
    <property type="match status" value="1"/>
</dbReference>
<dbReference type="PROSITE" id="PS50250">
    <property type="entry name" value="PCI"/>
    <property type="match status" value="1"/>
</dbReference>
<dbReference type="PROSITE" id="PS50005">
    <property type="entry name" value="TPR"/>
    <property type="match status" value="1"/>
</dbReference>
<dbReference type="PROSITE" id="PS50293">
    <property type="entry name" value="TPR_REGION"/>
    <property type="match status" value="1"/>
</dbReference>
<name>RPN7_YEAST</name>
<reference key="1">
    <citation type="journal article" date="1997" name="Nature">
        <title>The nucleotide sequence of Saccharomyces cerevisiae chromosome XVI.</title>
        <authorList>
            <person name="Bussey H."/>
            <person name="Storms R.K."/>
            <person name="Ahmed A."/>
            <person name="Albermann K."/>
            <person name="Allen E."/>
            <person name="Ansorge W."/>
            <person name="Araujo R."/>
            <person name="Aparicio A."/>
            <person name="Barrell B.G."/>
            <person name="Badcock K."/>
            <person name="Benes V."/>
            <person name="Botstein D."/>
            <person name="Bowman S."/>
            <person name="Brueckner M."/>
            <person name="Carpenter J."/>
            <person name="Cherry J.M."/>
            <person name="Chung E."/>
            <person name="Churcher C.M."/>
            <person name="Coster F."/>
            <person name="Davis K."/>
            <person name="Davis R.W."/>
            <person name="Dietrich F.S."/>
            <person name="Delius H."/>
            <person name="DiPaolo T."/>
            <person name="Dubois E."/>
            <person name="Duesterhoeft A."/>
            <person name="Duncan M."/>
            <person name="Floeth M."/>
            <person name="Fortin N."/>
            <person name="Friesen J.D."/>
            <person name="Fritz C."/>
            <person name="Goffeau A."/>
            <person name="Hall J."/>
            <person name="Hebling U."/>
            <person name="Heumann K."/>
            <person name="Hilbert H."/>
            <person name="Hillier L.W."/>
            <person name="Hunicke-Smith S."/>
            <person name="Hyman R.W."/>
            <person name="Johnston M."/>
            <person name="Kalman S."/>
            <person name="Kleine K."/>
            <person name="Komp C."/>
            <person name="Kurdi O."/>
            <person name="Lashkari D."/>
            <person name="Lew H."/>
            <person name="Lin A."/>
            <person name="Lin D."/>
            <person name="Louis E.J."/>
            <person name="Marathe R."/>
            <person name="Messenguy F."/>
            <person name="Mewes H.-W."/>
            <person name="Mirtipati S."/>
            <person name="Moestl D."/>
            <person name="Mueller-Auer S."/>
            <person name="Namath A."/>
            <person name="Nentwich U."/>
            <person name="Oefner P."/>
            <person name="Pearson D."/>
            <person name="Petel F.X."/>
            <person name="Pohl T.M."/>
            <person name="Purnelle B."/>
            <person name="Rajandream M.A."/>
            <person name="Rechmann S."/>
            <person name="Rieger M."/>
            <person name="Riles L."/>
            <person name="Roberts D."/>
            <person name="Schaefer M."/>
            <person name="Scharfe M."/>
            <person name="Scherens B."/>
            <person name="Schramm S."/>
            <person name="Schroeder M."/>
            <person name="Sdicu A.-M."/>
            <person name="Tettelin H."/>
            <person name="Urrestarazu L.A."/>
            <person name="Ushinsky S."/>
            <person name="Vierendeels F."/>
            <person name="Vissers S."/>
            <person name="Voss H."/>
            <person name="Walsh S.V."/>
            <person name="Wambutt R."/>
            <person name="Wang Y."/>
            <person name="Wedler E."/>
            <person name="Wedler H."/>
            <person name="Winnett E."/>
            <person name="Zhong W.-W."/>
            <person name="Zollner A."/>
            <person name="Vo D.H."/>
            <person name="Hani J."/>
        </authorList>
    </citation>
    <scope>NUCLEOTIDE SEQUENCE [LARGE SCALE GENOMIC DNA]</scope>
    <source>
        <strain>ATCC 204508 / S288c</strain>
    </source>
</reference>
<reference key="2">
    <citation type="journal article" date="2014" name="G3 (Bethesda)">
        <title>The reference genome sequence of Saccharomyces cerevisiae: Then and now.</title>
        <authorList>
            <person name="Engel S.R."/>
            <person name="Dietrich F.S."/>
            <person name="Fisk D.G."/>
            <person name="Binkley G."/>
            <person name="Balakrishnan R."/>
            <person name="Costanzo M.C."/>
            <person name="Dwight S.S."/>
            <person name="Hitz B.C."/>
            <person name="Karra K."/>
            <person name="Nash R.S."/>
            <person name="Weng S."/>
            <person name="Wong E.D."/>
            <person name="Lloyd P."/>
            <person name="Skrzypek M.S."/>
            <person name="Miyasato S.R."/>
            <person name="Simison M."/>
            <person name="Cherry J.M."/>
        </authorList>
    </citation>
    <scope>GENOME REANNOTATION</scope>
    <source>
        <strain>ATCC 204508 / S288c</strain>
    </source>
</reference>
<reference key="3">
    <citation type="journal article" date="2007" name="Genome Res.">
        <title>Approaching a complete repository of sequence-verified protein-encoding clones for Saccharomyces cerevisiae.</title>
        <authorList>
            <person name="Hu Y."/>
            <person name="Rolfs A."/>
            <person name="Bhullar B."/>
            <person name="Murthy T.V.S."/>
            <person name="Zhu C."/>
            <person name="Berger M.F."/>
            <person name="Camargo A.A."/>
            <person name="Kelley F."/>
            <person name="McCarron S."/>
            <person name="Jepson D."/>
            <person name="Richardson A."/>
            <person name="Raphael J."/>
            <person name="Moreira D."/>
            <person name="Taycher E."/>
            <person name="Zuo D."/>
            <person name="Mohr S."/>
            <person name="Kane M.F."/>
            <person name="Williamson J."/>
            <person name="Simpson A.J.G."/>
            <person name="Bulyk M.L."/>
            <person name="Harlow E."/>
            <person name="Marsischky G."/>
            <person name="Kolodner R.D."/>
            <person name="LaBaer J."/>
        </authorList>
    </citation>
    <scope>NUCLEOTIDE SEQUENCE [GENOMIC DNA]</scope>
    <source>
        <strain>ATCC 204508 / S288c</strain>
    </source>
</reference>
<reference key="4">
    <citation type="journal article" date="2003" name="Arch. Biochem. Biophys.">
        <title>N-terminal modifications of the 19S regulatory particle subunits of the yeast proteasome.</title>
        <authorList>
            <person name="Kimura Y."/>
            <person name="Saeki Y."/>
            <person name="Yokosawa H."/>
            <person name="Polevoda B."/>
            <person name="Sherman F."/>
            <person name="Hirano H."/>
        </authorList>
    </citation>
    <scope>PROTEIN SEQUENCE OF 2-9</scope>
</reference>
<reference key="5">
    <citation type="journal article" date="1998" name="Cell">
        <title>A subcomplex of the proteasome regulatory particle required for ubiquitin-conjugate degradation and related to the COP9-signalosome and eIF3.</title>
        <authorList>
            <person name="Glickman M.H."/>
            <person name="Rubin D.M."/>
            <person name="Coux O."/>
            <person name="Wefes I."/>
            <person name="Pfeifer G."/>
            <person name="Cjeka Z."/>
            <person name="Baumeister W."/>
            <person name="Fried V.A."/>
            <person name="Finley D."/>
        </authorList>
    </citation>
    <scope>FUNCTION</scope>
    <scope>SUBUNIT</scope>
</reference>
<reference key="6">
    <citation type="journal article" date="1998" name="Trends Biochem. Sci.">
        <title>Unified nomenclature for subunits of the Saccharomyces cerevisiae proteasome regulatory particle.</title>
        <authorList>
            <person name="Finley D."/>
            <person name="Tanaka K."/>
            <person name="Mann C."/>
            <person name="Feldmann H."/>
            <person name="Hochstrasser M."/>
            <person name="Vierstra R."/>
            <person name="Johnston S."/>
            <person name="Hampton R."/>
            <person name="Haber J."/>
            <person name="Mccusker J."/>
            <person name="Silver P."/>
            <person name="Frontali L."/>
            <person name="Thorsness P."/>
            <person name="Varshavsky A."/>
            <person name="Byers B."/>
            <person name="Madura K."/>
            <person name="Reed S.I."/>
            <person name="Wolf D."/>
            <person name="Jentsch S."/>
            <person name="Sommer T."/>
            <person name="Baumeister W."/>
            <person name="Goldberg A."/>
            <person name="Fried V."/>
            <person name="Rubin D.M."/>
            <person name="Toh-e A."/>
        </authorList>
    </citation>
    <scope>GENE NAME</scope>
</reference>
<reference key="7">
    <citation type="journal article" date="2003" name="Nature">
        <title>Global analysis of protein localization in budding yeast.</title>
        <authorList>
            <person name="Huh W.-K."/>
            <person name="Falvo J.V."/>
            <person name="Gerke L.C."/>
            <person name="Carroll A.S."/>
            <person name="Howson R.W."/>
            <person name="Weissman J.S."/>
            <person name="O'Shea E.K."/>
        </authorList>
    </citation>
    <scope>SUBCELLULAR LOCATION [LARGE SCALE ANALYSIS]</scope>
</reference>
<reference key="8">
    <citation type="journal article" date="2003" name="Nature">
        <title>Global analysis of protein expression in yeast.</title>
        <authorList>
            <person name="Ghaemmaghami S."/>
            <person name="Huh W.-K."/>
            <person name="Bower K."/>
            <person name="Howson R.W."/>
            <person name="Belle A."/>
            <person name="Dephoure N."/>
            <person name="O'Shea E.K."/>
            <person name="Weissman J.S."/>
        </authorList>
    </citation>
    <scope>LEVEL OF PROTEIN EXPRESSION [LARGE SCALE ANALYSIS]</scope>
</reference>
<reference key="9">
    <citation type="journal article" date="2004" name="J. Biol. Chem.">
        <title>Rpn7 Is required for the structural integrity of the 26 S proteasome of Saccharomyces cerevisiae.</title>
        <authorList>
            <person name="Isono E."/>
            <person name="Saeki Y."/>
            <person name="Yokosawa H."/>
            <person name="Toh-e A."/>
        </authorList>
    </citation>
    <scope>FUNCTION</scope>
</reference>
<reference key="10">
    <citation type="journal article" date="2008" name="Mol. Cell. Proteomics">
        <title>A multidimensional chromatography technology for in-depth phosphoproteome analysis.</title>
        <authorList>
            <person name="Albuquerque C.P."/>
            <person name="Smolka M.B."/>
            <person name="Payne S.H."/>
            <person name="Bafna V."/>
            <person name="Eng J."/>
            <person name="Zhou H."/>
        </authorList>
    </citation>
    <scope>PHOSPHORYLATION [LARGE SCALE ANALYSIS] AT SER-8 AND SER-77</scope>
    <scope>IDENTIFICATION BY MASS SPECTROMETRY [LARGE SCALE ANALYSIS]</scope>
</reference>
<reference key="11">
    <citation type="journal article" date="2009" name="Cell">
        <title>Multiple proteasome-interacting proteins assist the assembly of the yeast 19S regulatory particle.</title>
        <authorList>
            <person name="Saeki Y."/>
            <person name="Toh-E A."/>
            <person name="Kudo T."/>
            <person name="Kawamura H."/>
            <person name="Tanaka K."/>
        </authorList>
    </citation>
    <scope>SUBCELLULAR LOCATION</scope>
</reference>
<reference key="12">
    <citation type="journal article" date="2009" name="Nat. Chem. Biol.">
        <title>Substrate selection by the proteasome during degradation of protein complexes.</title>
        <authorList>
            <person name="Prakash S."/>
            <person name="Inobe T."/>
            <person name="Hatch A.J."/>
            <person name="Matouschek A."/>
        </authorList>
    </citation>
    <scope>FUNCTION</scope>
</reference>
<reference key="13">
    <citation type="journal article" date="2009" name="Science">
        <title>Global analysis of Cdk1 substrate phosphorylation sites provides insights into evolution.</title>
        <authorList>
            <person name="Holt L.J."/>
            <person name="Tuch B.B."/>
            <person name="Villen J."/>
            <person name="Johnson A.D."/>
            <person name="Gygi S.P."/>
            <person name="Morgan D.O."/>
        </authorList>
    </citation>
    <scope>PHOSPHORYLATION [LARGE SCALE ANALYSIS] AT SER-8 AND SER-77</scope>
    <scope>IDENTIFICATION BY MASS SPECTROMETRY [LARGE SCALE ANALYSIS]</scope>
</reference>
<reference key="14">
    <citation type="journal article" date="2012" name="Proc. Natl. Acad. Sci. U.S.A.">
        <title>N-terminal acetylome analyses and functional insights of the N-terminal acetyltransferase NatB.</title>
        <authorList>
            <person name="Van Damme P."/>
            <person name="Lasa M."/>
            <person name="Polevoda B."/>
            <person name="Gazquez C."/>
            <person name="Elosegui-Artola A."/>
            <person name="Kim D.S."/>
            <person name="De Juan-Pardo E."/>
            <person name="Demeyer K."/>
            <person name="Hole K."/>
            <person name="Larrea E."/>
            <person name="Timmerman E."/>
            <person name="Prieto J."/>
            <person name="Arnesen T."/>
            <person name="Sherman F."/>
            <person name="Gevaert K."/>
            <person name="Aldabe R."/>
        </authorList>
    </citation>
    <scope>IDENTIFICATION BY MASS SPECTROMETRY [LARGE SCALE ANALYSIS]</scope>
</reference>
<reference key="15">
    <citation type="journal article" date="2012" name="Proc. Natl. Acad. Sci. U.S.A.">
        <title>Near-atomic resolution structural model of the yeast 26S proteasome.</title>
        <authorList>
            <person name="Beck F."/>
            <person name="Unverdorben P."/>
            <person name="Bohn S."/>
            <person name="Schweitzer A."/>
            <person name="Pfeifer G."/>
            <person name="Sakata E."/>
            <person name="Nickell S."/>
            <person name="Plitzko J.M."/>
            <person name="Villa E."/>
            <person name="Baumeister W."/>
            <person name="Forster F."/>
        </authorList>
    </citation>
    <scope>STRUCTURE BY ELECTRON MICROSCOPY (7.4 ANGSTROMS) OF THE 26S PROTEASOME</scope>
</reference>
<reference evidence="19 20 21" key="16">
    <citation type="journal article" date="2014" name="Proc. Natl. Acad. Sci. U.S.A.">
        <title>Deep classification of a large cryo-EM dataset defines the conformational landscape of the 26S proteasome.</title>
        <authorList>
            <person name="Unverdorben P."/>
            <person name="Beck F."/>
            <person name="Sledz P."/>
            <person name="Schweitzer A."/>
            <person name="Pfeifer G."/>
            <person name="Plitzko J.M."/>
            <person name="Baumeister W."/>
            <person name="Forster F."/>
        </authorList>
    </citation>
    <scope>STRUCTURE BY ELECTRON MICROSCOPY (7.70 ANGSTROMS)</scope>
    <scope>SUBUNIT</scope>
</reference>
<reference evidence="16" key="17">
    <citation type="journal article" date="2016" name="Elife">
        <title>Atomic structure of the 26S proteasome lid reveals the mechanism of deubiquitinase inhibition.</title>
        <authorList>
            <person name="Dambacher C.M."/>
            <person name="Worden E.J."/>
            <person name="Herzik M.A."/>
            <person name="Martin A."/>
            <person name="Lander G.C."/>
        </authorList>
    </citation>
    <scope>STRUCTURE BY ELECTRON MICROSCOPY (3.50 ANGSTROMS)</scope>
    <scope>SUBUNIT</scope>
</reference>
<reference evidence="17 18" key="18">
    <citation type="journal article" date="2016" name="Proc. Natl. Acad. Sci. U.S.A.">
        <title>Structure of an endogenous yeast 26S proteasome reveals two major conformational states.</title>
        <authorList>
            <person name="Luan B."/>
            <person name="Huang X."/>
            <person name="Wu J."/>
            <person name="Mei Z."/>
            <person name="Wang Y."/>
            <person name="Xue X."/>
            <person name="Yan C."/>
            <person name="Wang J."/>
            <person name="Finley D.J."/>
            <person name="Shi Y."/>
            <person name="Wang F."/>
        </authorList>
    </citation>
    <scope>STRUCTURE BY ELECTRON MICROSCOPY (4.60 ANGSTROMS)</scope>
    <scope>SUBUNIT</scope>
</reference>
<proteinExistence type="evidence at protein level"/>
<sequence length="429" mass="48959">MVDVEEKSQEVEYVDPTVNRVPNYEVSEKAFLLTQSKVSIEQRKEAAEFVLAKIKEEEMAPYYKYLCEEYLVNNGQSDLEHDEKSDSLNEWIKFDQELYNELCKKNESKIKELNEKIQKLEEDDEGELEQAQAWINLGEYYAQIGDKDNAEKTLGKSLSKAISTGAKIDVMLTIARLGFFYNDQLYVKEKLEAVNSMIEKGGDWERRNRYKTYYGIHCLAVRNFKEAAKLLVDSLATFTSIELTSYESIATYASVTGLFTLERTDLKSKVIDSPELLSLISTTAALQSISSLTISLYASDYASYFPYLLETYANVLIPCKYLNRHADFFVREMRRKVYAQLLESYKTLSLKSMASAFGVSVAFLDNDLGKFIPNKQLNCVIDRVNGIVETNRPDNKNAQYHLLVKQGDGLLTKLQKYGAAVRLTGSDRV</sequence>
<protein>
    <recommendedName>
        <fullName>26S proteasome regulatory subunit RPN7</fullName>
    </recommendedName>
</protein>
<gene>
    <name evidence="13" type="primary">RPN7</name>
    <name evidence="15" type="ordered locus">YPR108W</name>
    <name type="ORF">P8283.8</name>
</gene>
<feature type="initiator methionine" description="Removed" evidence="2">
    <location>
        <position position="1"/>
    </location>
</feature>
<feature type="chain" id="PRO_0000173845" description="26S proteasome regulatory subunit RPN7">
    <location>
        <begin position="2"/>
        <end position="429"/>
    </location>
</feature>
<feature type="repeat" description="TPR">
    <location>
        <begin position="131"/>
        <end position="164"/>
    </location>
</feature>
<feature type="domain" description="PCI" evidence="1">
    <location>
        <begin position="223"/>
        <end position="395"/>
    </location>
</feature>
<feature type="modified residue" description="Phosphoserine" evidence="22 23">
    <location>
        <position position="8"/>
    </location>
</feature>
<feature type="modified residue" description="Phosphoserine" evidence="22 23">
    <location>
        <position position="77"/>
    </location>
</feature>
<feature type="sequence conflict" description="In Ref. 3; AAT92788." evidence="14" ref="3">
    <original>S</original>
    <variation>G</variation>
    <location>
        <position position="8"/>
    </location>
</feature>
<feature type="helix" evidence="24">
    <location>
        <begin position="25"/>
        <end position="34"/>
    </location>
</feature>
<feature type="strand" evidence="24">
    <location>
        <begin position="36"/>
        <end position="38"/>
    </location>
</feature>
<feature type="helix" evidence="24">
    <location>
        <begin position="40"/>
        <end position="55"/>
    </location>
</feature>
<feature type="turn" evidence="24">
    <location>
        <begin position="56"/>
        <end position="58"/>
    </location>
</feature>
<feature type="helix" evidence="24">
    <location>
        <begin position="60"/>
        <end position="71"/>
    </location>
</feature>
<feature type="helix" evidence="24">
    <location>
        <begin position="96"/>
        <end position="122"/>
    </location>
</feature>
<feature type="helix" evidence="24">
    <location>
        <begin position="127"/>
        <end position="143"/>
    </location>
</feature>
<feature type="helix" evidence="24">
    <location>
        <begin position="147"/>
        <end position="157"/>
    </location>
</feature>
<feature type="helix" evidence="24">
    <location>
        <begin position="164"/>
        <end position="167"/>
    </location>
</feature>
<feature type="helix" evidence="24">
    <location>
        <begin position="169"/>
        <end position="181"/>
    </location>
</feature>
<feature type="helix" evidence="24">
    <location>
        <begin position="184"/>
        <end position="200"/>
    </location>
</feature>
<feature type="helix" evidence="24">
    <location>
        <begin position="204"/>
        <end position="220"/>
    </location>
</feature>
<feature type="helix" evidence="24">
    <location>
        <begin position="224"/>
        <end position="234"/>
    </location>
</feature>
<feature type="turn" evidence="24">
    <location>
        <begin position="240"/>
        <end position="242"/>
    </location>
</feature>
<feature type="helix" evidence="24">
    <location>
        <begin position="246"/>
        <end position="260"/>
    </location>
</feature>
<feature type="helix" evidence="24">
    <location>
        <begin position="263"/>
        <end position="269"/>
    </location>
</feature>
<feature type="helix" evidence="24">
    <location>
        <begin position="276"/>
        <end position="279"/>
    </location>
</feature>
<feature type="helix" evidence="24">
    <location>
        <begin position="280"/>
        <end position="282"/>
    </location>
</feature>
<feature type="strand" evidence="24">
    <location>
        <begin position="283"/>
        <end position="285"/>
    </location>
</feature>
<feature type="helix" evidence="24">
    <location>
        <begin position="286"/>
        <end position="297"/>
    </location>
</feature>
<feature type="helix" evidence="24">
    <location>
        <begin position="301"/>
        <end position="314"/>
    </location>
</feature>
<feature type="turn" evidence="24">
    <location>
        <begin position="315"/>
        <end position="318"/>
    </location>
</feature>
<feature type="turn" evidence="24">
    <location>
        <begin position="320"/>
        <end position="322"/>
    </location>
</feature>
<feature type="helix" evidence="24">
    <location>
        <begin position="323"/>
        <end position="325"/>
    </location>
</feature>
<feature type="helix" evidence="24">
    <location>
        <begin position="326"/>
        <end position="342"/>
    </location>
</feature>
<feature type="strand" evidence="24">
    <location>
        <begin position="345"/>
        <end position="349"/>
    </location>
</feature>
<feature type="helix" evidence="24">
    <location>
        <begin position="350"/>
        <end position="357"/>
    </location>
</feature>
<feature type="helix" evidence="24">
    <location>
        <begin position="361"/>
        <end position="371"/>
    </location>
</feature>
<feature type="helix" evidence="24">
    <location>
        <begin position="372"/>
        <end position="374"/>
    </location>
</feature>
<feature type="strand" evidence="24">
    <location>
        <begin position="379"/>
        <end position="382"/>
    </location>
</feature>
<feature type="turn" evidence="24">
    <location>
        <begin position="383"/>
        <end position="386"/>
    </location>
</feature>
<feature type="strand" evidence="24">
    <location>
        <begin position="387"/>
        <end position="390"/>
    </location>
</feature>
<feature type="helix" evidence="24">
    <location>
        <begin position="396"/>
        <end position="423"/>
    </location>
</feature>